<keyword id="KW-0963">Cytoplasm</keyword>
<keyword id="KW-1185">Reference proteome</keyword>
<keyword id="KW-0690">Ribosome biogenesis</keyword>
<feature type="chain" id="PRO_0000384640" description="Ribosome maturation factor RimP">
    <location>
        <begin position="1"/>
        <end position="155"/>
    </location>
</feature>
<reference key="1">
    <citation type="journal article" date="2009" name="Environ. Microbiol.">
        <title>Genome sequence of Desulfobacterium autotrophicum HRM2, a marine sulfate reducer oxidizing organic carbon completely to carbon dioxide.</title>
        <authorList>
            <person name="Strittmatter A.W."/>
            <person name="Liesegang H."/>
            <person name="Rabus R."/>
            <person name="Decker I."/>
            <person name="Amann J."/>
            <person name="Andres S."/>
            <person name="Henne A."/>
            <person name="Fricke W.F."/>
            <person name="Martinez-Arias R."/>
            <person name="Bartels D."/>
            <person name="Goesmann A."/>
            <person name="Krause L."/>
            <person name="Puehler A."/>
            <person name="Klenk H.P."/>
            <person name="Richter M."/>
            <person name="Schuler M."/>
            <person name="Gloeckner F.O."/>
            <person name="Meyerdierks A."/>
            <person name="Gottschalk G."/>
            <person name="Amann R."/>
        </authorList>
    </citation>
    <scope>NUCLEOTIDE SEQUENCE [LARGE SCALE GENOMIC DNA]</scope>
    <source>
        <strain>ATCC 43914 / DSM 3382 / VKM B-1955 / HRM2</strain>
    </source>
</reference>
<organism>
    <name type="scientific">Desulforapulum autotrophicum (strain ATCC 43914 / DSM 3382 / VKM B-1955 / HRM2)</name>
    <name type="common">Desulfobacterium autotrophicum</name>
    <dbReference type="NCBI Taxonomy" id="177437"/>
    <lineage>
        <taxon>Bacteria</taxon>
        <taxon>Pseudomonadati</taxon>
        <taxon>Thermodesulfobacteriota</taxon>
        <taxon>Desulfobacteria</taxon>
        <taxon>Desulfobacterales</taxon>
        <taxon>Desulfobacteraceae</taxon>
        <taxon>Desulforapulum</taxon>
    </lineage>
</organism>
<gene>
    <name evidence="1" type="primary">rimP</name>
    <name type="ordered locus">HRM2_04640</name>
</gene>
<evidence type="ECO:0000255" key="1">
    <source>
        <dbReference type="HAMAP-Rule" id="MF_01077"/>
    </source>
</evidence>
<name>RIMP_DESAH</name>
<protein>
    <recommendedName>
        <fullName evidence="1">Ribosome maturation factor RimP</fullName>
    </recommendedName>
</protein>
<dbReference type="EMBL" id="CP001087">
    <property type="protein sequence ID" value="ACN13578.1"/>
    <property type="molecule type" value="Genomic_DNA"/>
</dbReference>
<dbReference type="RefSeq" id="WP_012662827.1">
    <property type="nucleotide sequence ID" value="NC_012108.1"/>
</dbReference>
<dbReference type="SMR" id="C0QHM0"/>
<dbReference type="STRING" id="177437.HRM2_04640"/>
<dbReference type="KEGG" id="dat:HRM2_04640"/>
<dbReference type="eggNOG" id="COG0779">
    <property type="taxonomic scope" value="Bacteria"/>
</dbReference>
<dbReference type="HOGENOM" id="CLU_070525_2_2_7"/>
<dbReference type="OrthoDB" id="9805006at2"/>
<dbReference type="Proteomes" id="UP000000442">
    <property type="component" value="Chromosome"/>
</dbReference>
<dbReference type="GO" id="GO:0005829">
    <property type="term" value="C:cytosol"/>
    <property type="evidence" value="ECO:0007669"/>
    <property type="project" value="TreeGrafter"/>
</dbReference>
<dbReference type="GO" id="GO:0000028">
    <property type="term" value="P:ribosomal small subunit assembly"/>
    <property type="evidence" value="ECO:0007669"/>
    <property type="project" value="TreeGrafter"/>
</dbReference>
<dbReference type="GO" id="GO:0006412">
    <property type="term" value="P:translation"/>
    <property type="evidence" value="ECO:0007669"/>
    <property type="project" value="TreeGrafter"/>
</dbReference>
<dbReference type="CDD" id="cd01734">
    <property type="entry name" value="YlxS_C"/>
    <property type="match status" value="1"/>
</dbReference>
<dbReference type="Gene3D" id="2.30.30.180">
    <property type="entry name" value="Ribosome maturation factor RimP, C-terminal domain"/>
    <property type="match status" value="1"/>
</dbReference>
<dbReference type="Gene3D" id="3.30.300.70">
    <property type="entry name" value="RimP-like superfamily, N-terminal"/>
    <property type="match status" value="1"/>
</dbReference>
<dbReference type="HAMAP" id="MF_01077">
    <property type="entry name" value="RimP"/>
    <property type="match status" value="1"/>
</dbReference>
<dbReference type="InterPro" id="IPR003728">
    <property type="entry name" value="Ribosome_maturation_RimP"/>
</dbReference>
<dbReference type="InterPro" id="IPR028998">
    <property type="entry name" value="RimP_C"/>
</dbReference>
<dbReference type="InterPro" id="IPR036847">
    <property type="entry name" value="RimP_C_sf"/>
</dbReference>
<dbReference type="InterPro" id="IPR028989">
    <property type="entry name" value="RimP_N"/>
</dbReference>
<dbReference type="InterPro" id="IPR035956">
    <property type="entry name" value="RimP_N_sf"/>
</dbReference>
<dbReference type="PANTHER" id="PTHR33867">
    <property type="entry name" value="RIBOSOME MATURATION FACTOR RIMP"/>
    <property type="match status" value="1"/>
</dbReference>
<dbReference type="PANTHER" id="PTHR33867:SF1">
    <property type="entry name" value="RIBOSOME MATURATION FACTOR RIMP"/>
    <property type="match status" value="1"/>
</dbReference>
<dbReference type="Pfam" id="PF17384">
    <property type="entry name" value="DUF150_C"/>
    <property type="match status" value="1"/>
</dbReference>
<dbReference type="Pfam" id="PF02576">
    <property type="entry name" value="RimP_N"/>
    <property type="match status" value="1"/>
</dbReference>
<dbReference type="SUPFAM" id="SSF74942">
    <property type="entry name" value="YhbC-like, C-terminal domain"/>
    <property type="match status" value="1"/>
</dbReference>
<dbReference type="SUPFAM" id="SSF75420">
    <property type="entry name" value="YhbC-like, N-terminal domain"/>
    <property type="match status" value="1"/>
</dbReference>
<sequence length="155" mass="17175">MKTQKRETNPIVTAIESIAEPLCIAEGFELVHVECVSDQGGMIVRIYLDKPGGITLDDCVHMTRHLGDIIDVELEEISAYRLEISSPGAKRPLKKLADFERFLGSRVKVEAVEPIGGRLKFTGILSKVQDGCVEVVVNNEPVVFHFEQISKSRLA</sequence>
<proteinExistence type="inferred from homology"/>
<accession>C0QHM0</accession>
<comment type="function">
    <text evidence="1">Required for maturation of 30S ribosomal subunits.</text>
</comment>
<comment type="subcellular location">
    <subcellularLocation>
        <location evidence="1">Cytoplasm</location>
    </subcellularLocation>
</comment>
<comment type="similarity">
    <text evidence="1">Belongs to the RimP family.</text>
</comment>